<accession>Q7YS70</accession>
<proteinExistence type="evidence at protein level"/>
<gene>
    <name type="primary">MECR</name>
    <name type="synonym">NBRF1</name>
</gene>
<organism>
    <name type="scientific">Bos taurus</name>
    <name type="common">Bovine</name>
    <dbReference type="NCBI Taxonomy" id="9913"/>
    <lineage>
        <taxon>Eukaryota</taxon>
        <taxon>Metazoa</taxon>
        <taxon>Chordata</taxon>
        <taxon>Craniata</taxon>
        <taxon>Vertebrata</taxon>
        <taxon>Euteleostomi</taxon>
        <taxon>Mammalia</taxon>
        <taxon>Eutheria</taxon>
        <taxon>Laurasiatheria</taxon>
        <taxon>Artiodactyla</taxon>
        <taxon>Ruminantia</taxon>
        <taxon>Pecora</taxon>
        <taxon>Bovidae</taxon>
        <taxon>Bovinae</taxon>
        <taxon>Bos</taxon>
    </lineage>
</organism>
<sequence length="373" mass="40275">MWVCGALCRTRAPAQLGQRLLPESRRRRPASASFSASAEPSRVRALVYGHHGDPAKVVELKNLELAAVGGSHVHVKMLAAPINPSDINMIQGNYGLLPQLPAVGGNEGVGQVVAVGSGVTGVKPGDWVIPANPGLGTWRTEAVFGEEELITVPSDIPLQSAATLGVNPCTAYRMLVDFERLRPRDSIIQNASNSGVGQAVIQIAAARGLRTINVLRDTPDLQKLTDTLKNLGANHVVTEEELRKPEMKSFFKDVPQPRLALNCVGGKSSTELLRHLAPGGTMVTYGGMAKQPVIASVSQLIFKDLKLRGFWLSQWKKDHSPDQFKELILTLCDLIRRGQLTAPACSEVPLQDYLCALEASTQPFVSSKQILTM</sequence>
<dbReference type="EC" id="1.3.1.104" evidence="9"/>
<dbReference type="EMBL" id="AY256973">
    <property type="protein sequence ID" value="AAP45003.1"/>
    <property type="molecule type" value="mRNA"/>
</dbReference>
<dbReference type="RefSeq" id="NP_858055.1">
    <property type="nucleotide sequence ID" value="NM_181669.2"/>
</dbReference>
<dbReference type="SMR" id="Q7YS70"/>
<dbReference type="FunCoup" id="Q7YS70">
    <property type="interactions" value="3139"/>
</dbReference>
<dbReference type="STRING" id="9913.ENSBTAP00000022932"/>
<dbReference type="PaxDb" id="9913-ENSBTAP00000022932"/>
<dbReference type="GeneID" id="353301"/>
<dbReference type="KEGG" id="bta:353301"/>
<dbReference type="CTD" id="51102"/>
<dbReference type="eggNOG" id="KOG0025">
    <property type="taxonomic scope" value="Eukaryota"/>
</dbReference>
<dbReference type="InParanoid" id="Q7YS70"/>
<dbReference type="OrthoDB" id="7482721at2759"/>
<dbReference type="SABIO-RK" id="Q7YS70"/>
<dbReference type="Proteomes" id="UP000009136">
    <property type="component" value="Unplaced"/>
</dbReference>
<dbReference type="GO" id="GO:0016020">
    <property type="term" value="C:membrane"/>
    <property type="evidence" value="ECO:0007669"/>
    <property type="project" value="GOC"/>
</dbReference>
<dbReference type="GO" id="GO:0005739">
    <property type="term" value="C:mitochondrion"/>
    <property type="evidence" value="ECO:0000250"/>
    <property type="project" value="UniProtKB"/>
</dbReference>
<dbReference type="GO" id="GO:0141148">
    <property type="term" value="F:enoyl-[acyl-carrier-protein] reductase (NADPH) activity"/>
    <property type="evidence" value="ECO:0000314"/>
    <property type="project" value="UniProtKB"/>
</dbReference>
<dbReference type="GO" id="GO:0046513">
    <property type="term" value="P:ceramide biosynthetic process"/>
    <property type="evidence" value="ECO:0000250"/>
    <property type="project" value="UniProtKB"/>
</dbReference>
<dbReference type="GO" id="GO:0006633">
    <property type="term" value="P:fatty acid biosynthetic process"/>
    <property type="evidence" value="ECO:0007669"/>
    <property type="project" value="UniProtKB-KW"/>
</dbReference>
<dbReference type="GO" id="GO:0006631">
    <property type="term" value="P:fatty acid metabolic process"/>
    <property type="evidence" value="ECO:0000314"/>
    <property type="project" value="UniProtKB"/>
</dbReference>
<dbReference type="GO" id="GO:0006879">
    <property type="term" value="P:intracellular iron ion homeostasis"/>
    <property type="evidence" value="ECO:0000250"/>
    <property type="project" value="UniProtKB"/>
</dbReference>
<dbReference type="CDD" id="cd08290">
    <property type="entry name" value="ETR"/>
    <property type="match status" value="1"/>
</dbReference>
<dbReference type="FunFam" id="3.40.50.720:FF:000112">
    <property type="entry name" value="Enoyl-[acyl-carrier-protein] reductase 1, mitochondrial"/>
    <property type="match status" value="1"/>
</dbReference>
<dbReference type="FunFam" id="3.90.180.10:FF:000010">
    <property type="entry name" value="Enoyl-[acyl-carrier-protein] reductase, mitochondrial"/>
    <property type="match status" value="1"/>
</dbReference>
<dbReference type="Gene3D" id="3.90.180.10">
    <property type="entry name" value="Medium-chain alcohol dehydrogenases, catalytic domain"/>
    <property type="match status" value="1"/>
</dbReference>
<dbReference type="Gene3D" id="3.40.50.720">
    <property type="entry name" value="NAD(P)-binding Rossmann-like Domain"/>
    <property type="match status" value="1"/>
</dbReference>
<dbReference type="InterPro" id="IPR013149">
    <property type="entry name" value="ADH-like_C"/>
</dbReference>
<dbReference type="InterPro" id="IPR013154">
    <property type="entry name" value="ADH-like_N"/>
</dbReference>
<dbReference type="InterPro" id="IPR011032">
    <property type="entry name" value="GroES-like_sf"/>
</dbReference>
<dbReference type="InterPro" id="IPR051034">
    <property type="entry name" value="Mito_Enoyl-ACP_Reductase"/>
</dbReference>
<dbReference type="InterPro" id="IPR036291">
    <property type="entry name" value="NAD(P)-bd_dom_sf"/>
</dbReference>
<dbReference type="InterPro" id="IPR020843">
    <property type="entry name" value="PKS_ER"/>
</dbReference>
<dbReference type="PANTHER" id="PTHR43981">
    <property type="entry name" value="ENOYL-[ACYL-CARRIER-PROTEIN] REDUCTASE, MITOCHONDRIAL"/>
    <property type="match status" value="1"/>
</dbReference>
<dbReference type="PANTHER" id="PTHR43981:SF9">
    <property type="entry name" value="ENOYL-[ACYL-CARRIER-PROTEIN] REDUCTASE, MITOCHONDRIAL"/>
    <property type="match status" value="1"/>
</dbReference>
<dbReference type="Pfam" id="PF08240">
    <property type="entry name" value="ADH_N"/>
    <property type="match status" value="1"/>
</dbReference>
<dbReference type="Pfam" id="PF00107">
    <property type="entry name" value="ADH_zinc_N"/>
    <property type="match status" value="1"/>
</dbReference>
<dbReference type="SMART" id="SM00829">
    <property type="entry name" value="PKS_ER"/>
    <property type="match status" value="1"/>
</dbReference>
<dbReference type="SUPFAM" id="SSF50129">
    <property type="entry name" value="GroES-like"/>
    <property type="match status" value="1"/>
</dbReference>
<dbReference type="SUPFAM" id="SSF51735">
    <property type="entry name" value="NAD(P)-binding Rossmann-fold domains"/>
    <property type="match status" value="1"/>
</dbReference>
<reference key="1">
    <citation type="journal article" date="2003" name="J. Biol. Chem.">
        <title>Characterization of 2-enoyl thioester reductase from mammals: an ortholog of Ybr026p/Mrf1'p of the yeast mitochondrial fatty acid synthesis type II.</title>
        <authorList>
            <person name="Miinalainen I.J."/>
            <person name="Chen Z.-J."/>
            <person name="Torkko J.M."/>
            <person name="Pirilae P.L."/>
            <person name="Sormunen R.T."/>
            <person name="Bergmann U."/>
            <person name="Qin Y.-M."/>
            <person name="Hiltunen J.K."/>
        </authorList>
    </citation>
    <scope>NUCLEOTIDE SEQUENCE [MRNA]</scope>
    <scope>IDENTIFICATION BY MASS SPECTROMETRY</scope>
    <scope>FUNCTION</scope>
    <scope>CATALYTIC ACTIVITY</scope>
    <scope>SUBCELLULAR LOCATION</scope>
    <scope>SUBUNIT</scope>
    <source>
        <tissue>Heart</tissue>
    </source>
</reference>
<evidence type="ECO:0000250" key="1">
    <source>
        <dbReference type="UniProtKB" id="Q8WZM3"/>
    </source>
</evidence>
<evidence type="ECO:0000250" key="2">
    <source>
        <dbReference type="UniProtKB" id="Q9BV79"/>
    </source>
</evidence>
<evidence type="ECO:0000250" key="3">
    <source>
        <dbReference type="UniProtKB" id="Q9DCS3"/>
    </source>
</evidence>
<evidence type="ECO:0000250" key="4">
    <source>
        <dbReference type="UniProtKB" id="Q9V6U9"/>
    </source>
</evidence>
<evidence type="ECO:0000255" key="5"/>
<evidence type="ECO:0000269" key="6">
    <source>
    </source>
</evidence>
<evidence type="ECO:0000303" key="7">
    <source>
    </source>
</evidence>
<evidence type="ECO:0000305" key="8"/>
<evidence type="ECO:0000305" key="9">
    <source>
    </source>
</evidence>
<protein>
    <recommendedName>
        <fullName>Enoyl-[acyl-carrier-protein] reductase, mitochondrial</fullName>
        <ecNumber evidence="9">1.3.1.104</ecNumber>
    </recommendedName>
    <alternativeName>
        <fullName evidence="7">2-enoyl thioester reductase</fullName>
    </alternativeName>
    <alternativeName>
        <fullName>Nuclear receptor-binding factor 1</fullName>
        <shortName>BtNrbf-1</shortName>
        <shortName>NRBF-1</shortName>
    </alternativeName>
</protein>
<comment type="function">
    <text evidence="2 3 4 6">Catalyzes the NADPH-dependent reduction of trans-2-enoyl thioesters in mitochondrial fatty acid synthesis (fatty acid synthesis type II) (PubMed:12654921). Fatty acid chain elongation in mitochondria uses acyl carrier protein (ACP) as an acyl group carrier, but the enzyme accepts both ACP and CoA thioesters as substrates in vitro. Displays a preference for medium-chain over short- and long-chain substrates (By similarity). May provide the octanoyl chain used for lipoic acid biosynthesis, regulating protein lipoylation and mitochondrial respiratory activity particularly in Purkinje cells (By similarity). Involved in iron homeostasis; affecting Fe-S cluster assembly and ceramide metabolism (By similarity). Required for proper morphology and bioenergetic functions of mitochondria (By similarity). Required for maintenance of neurons (By similarity).</text>
</comment>
<comment type="catalytic activity">
    <reaction evidence="9">
        <text>a 2,3-saturated acyl-[ACP] + NADP(+) = a (2E)-enoyl-[ACP] + NADPH + H(+)</text>
        <dbReference type="Rhea" id="RHEA:22564"/>
        <dbReference type="Rhea" id="RHEA-COMP:9925"/>
        <dbReference type="Rhea" id="RHEA-COMP:9926"/>
        <dbReference type="ChEBI" id="CHEBI:15378"/>
        <dbReference type="ChEBI" id="CHEBI:57783"/>
        <dbReference type="ChEBI" id="CHEBI:58349"/>
        <dbReference type="ChEBI" id="CHEBI:78784"/>
        <dbReference type="ChEBI" id="CHEBI:78785"/>
        <dbReference type="EC" id="1.3.1.104"/>
    </reaction>
    <physiologicalReaction direction="right-to-left" evidence="9">
        <dbReference type="Rhea" id="RHEA:22566"/>
    </physiologicalReaction>
</comment>
<comment type="catalytic activity">
    <reaction evidence="2">
        <text>(2E)-butenoyl-[ACP] + NADPH + H(+) = butanoyl-[ACP] + NADP(+)</text>
        <dbReference type="Rhea" id="RHEA:41812"/>
        <dbReference type="Rhea" id="RHEA-COMP:9627"/>
        <dbReference type="Rhea" id="RHEA-COMP:9628"/>
        <dbReference type="ChEBI" id="CHEBI:15378"/>
        <dbReference type="ChEBI" id="CHEBI:57783"/>
        <dbReference type="ChEBI" id="CHEBI:58349"/>
        <dbReference type="ChEBI" id="CHEBI:78453"/>
        <dbReference type="ChEBI" id="CHEBI:78454"/>
    </reaction>
    <physiologicalReaction direction="left-to-right" evidence="2">
        <dbReference type="Rhea" id="RHEA:41813"/>
    </physiologicalReaction>
</comment>
<comment type="catalytic activity">
    <reaction evidence="2">
        <text>(2E)-hexenoyl-[ACP] + NADPH + H(+) = hexanoyl-[ACP] + NADP(+)</text>
        <dbReference type="Rhea" id="RHEA:41832"/>
        <dbReference type="Rhea" id="RHEA-COMP:9631"/>
        <dbReference type="Rhea" id="RHEA-COMP:9632"/>
        <dbReference type="ChEBI" id="CHEBI:15378"/>
        <dbReference type="ChEBI" id="CHEBI:57783"/>
        <dbReference type="ChEBI" id="CHEBI:58349"/>
        <dbReference type="ChEBI" id="CHEBI:78458"/>
        <dbReference type="ChEBI" id="CHEBI:78459"/>
    </reaction>
    <physiologicalReaction direction="left-to-right" evidence="2">
        <dbReference type="Rhea" id="RHEA:41833"/>
    </physiologicalReaction>
</comment>
<comment type="catalytic activity">
    <reaction evidence="2">
        <text>(2E)-octenoyl-[ACP] + NADPH + H(+) = octanoyl-[ACP] + NADP(+)</text>
        <dbReference type="Rhea" id="RHEA:41848"/>
        <dbReference type="Rhea" id="RHEA-COMP:9635"/>
        <dbReference type="Rhea" id="RHEA-COMP:9636"/>
        <dbReference type="ChEBI" id="CHEBI:15378"/>
        <dbReference type="ChEBI" id="CHEBI:57783"/>
        <dbReference type="ChEBI" id="CHEBI:58349"/>
        <dbReference type="ChEBI" id="CHEBI:78462"/>
        <dbReference type="ChEBI" id="CHEBI:78463"/>
    </reaction>
    <physiologicalReaction direction="left-to-right" evidence="2">
        <dbReference type="Rhea" id="RHEA:41849"/>
    </physiologicalReaction>
</comment>
<comment type="catalytic activity">
    <reaction evidence="9">
        <text>(2E)-decenoyl-[ACP] + NADPH + H(+) = decanoyl-[ACP] + NADP(+)</text>
        <dbReference type="Rhea" id="RHEA:41864"/>
        <dbReference type="Rhea" id="RHEA-COMP:9639"/>
        <dbReference type="Rhea" id="RHEA-COMP:9640"/>
        <dbReference type="ChEBI" id="CHEBI:15378"/>
        <dbReference type="ChEBI" id="CHEBI:57783"/>
        <dbReference type="ChEBI" id="CHEBI:58349"/>
        <dbReference type="ChEBI" id="CHEBI:78467"/>
        <dbReference type="ChEBI" id="CHEBI:78468"/>
    </reaction>
    <physiologicalReaction direction="left-to-right" evidence="9">
        <dbReference type="Rhea" id="RHEA:41865"/>
    </physiologicalReaction>
</comment>
<comment type="catalytic activity">
    <reaction evidence="2">
        <text>(2E)-dodecenoyl-[ACP] + NADPH + H(+) = dodecanoyl-[ACP] + NADP(+)</text>
        <dbReference type="Rhea" id="RHEA:41880"/>
        <dbReference type="Rhea" id="RHEA-COMP:9643"/>
        <dbReference type="Rhea" id="RHEA-COMP:9644"/>
        <dbReference type="ChEBI" id="CHEBI:15378"/>
        <dbReference type="ChEBI" id="CHEBI:57783"/>
        <dbReference type="ChEBI" id="CHEBI:58349"/>
        <dbReference type="ChEBI" id="CHEBI:65264"/>
        <dbReference type="ChEBI" id="CHEBI:78472"/>
    </reaction>
    <physiologicalReaction direction="left-to-right" evidence="2">
        <dbReference type="Rhea" id="RHEA:41881"/>
    </physiologicalReaction>
</comment>
<comment type="catalytic activity">
    <reaction evidence="2">
        <text>(2E)-tetradecenoyl-[ACP] + NADPH + H(+) = tetradecanoyl-[ACP] + NADP(+)</text>
        <dbReference type="Rhea" id="RHEA:41896"/>
        <dbReference type="Rhea" id="RHEA-COMP:9647"/>
        <dbReference type="Rhea" id="RHEA-COMP:9648"/>
        <dbReference type="ChEBI" id="CHEBI:15378"/>
        <dbReference type="ChEBI" id="CHEBI:57783"/>
        <dbReference type="ChEBI" id="CHEBI:58349"/>
        <dbReference type="ChEBI" id="CHEBI:78475"/>
        <dbReference type="ChEBI" id="CHEBI:78477"/>
    </reaction>
    <physiologicalReaction direction="left-to-right" evidence="2">
        <dbReference type="Rhea" id="RHEA:41897"/>
    </physiologicalReaction>
</comment>
<comment type="catalytic activity">
    <reaction evidence="2">
        <text>(2E)-hexadecenoyl-[ACP] + NADPH + H(+) = hexadecanoyl-[ACP] + NADP(+)</text>
        <dbReference type="Rhea" id="RHEA:41912"/>
        <dbReference type="Rhea" id="RHEA-COMP:9651"/>
        <dbReference type="Rhea" id="RHEA-COMP:9652"/>
        <dbReference type="ChEBI" id="CHEBI:15378"/>
        <dbReference type="ChEBI" id="CHEBI:57783"/>
        <dbReference type="ChEBI" id="CHEBI:58349"/>
        <dbReference type="ChEBI" id="CHEBI:78481"/>
        <dbReference type="ChEBI" id="CHEBI:78483"/>
    </reaction>
    <physiologicalReaction direction="left-to-right" evidence="2">
        <dbReference type="Rhea" id="RHEA:41913"/>
    </physiologicalReaction>
</comment>
<comment type="subunit">
    <text evidence="6">Homodimer.</text>
</comment>
<comment type="subcellular location">
    <subcellularLocation>
        <location evidence="6">Mitochondrion</location>
    </subcellularLocation>
</comment>
<comment type="similarity">
    <text evidence="8">Belongs to the zinc-containing alcohol dehydrogenase family. Quinone oxidoreductase subfamily.</text>
</comment>
<feature type="transit peptide" description="Mitochondrion" evidence="5">
    <location>
        <begin position="1"/>
        <end position="53"/>
    </location>
</feature>
<feature type="chain" id="PRO_0000000887" description="Enoyl-[acyl-carrier-protein] reductase, mitochondrial">
    <location>
        <begin position="54"/>
        <end position="373"/>
    </location>
</feature>
<feature type="active site" description="Proton donor" evidence="1">
    <location>
        <position position="94"/>
    </location>
</feature>
<feature type="binding site" evidence="1">
    <location>
        <position position="167"/>
    </location>
    <ligand>
        <name>NADP(+)</name>
        <dbReference type="ChEBI" id="CHEBI:58349"/>
    </ligand>
</feature>
<feature type="binding site" evidence="1">
    <location>
        <begin position="193"/>
        <end position="196"/>
    </location>
    <ligand>
        <name>NADP(+)</name>
        <dbReference type="ChEBI" id="CHEBI:58349"/>
    </ligand>
</feature>
<feature type="binding site" evidence="1">
    <location>
        <begin position="216"/>
        <end position="218"/>
    </location>
    <ligand>
        <name>NADP(+)</name>
        <dbReference type="ChEBI" id="CHEBI:58349"/>
    </ligand>
</feature>
<feature type="binding site" evidence="1">
    <location>
        <begin position="285"/>
        <end position="288"/>
    </location>
    <ligand>
        <name>NADP(+)</name>
        <dbReference type="ChEBI" id="CHEBI:58349"/>
    </ligand>
</feature>
<feature type="binding site" evidence="1">
    <location>
        <begin position="310"/>
        <end position="312"/>
    </location>
    <ligand>
        <name>NADP(+)</name>
        <dbReference type="ChEBI" id="CHEBI:58349"/>
    </ligand>
</feature>
<feature type="binding site" evidence="1">
    <location>
        <position position="368"/>
    </location>
    <ligand>
        <name>NADP(+)</name>
        <dbReference type="ChEBI" id="CHEBI:58349"/>
    </ligand>
</feature>
<feature type="modified residue" description="N6-acetyllysine; alternate" evidence="3">
    <location>
        <position position="61"/>
    </location>
</feature>
<feature type="modified residue" description="N6-succinyllysine; alternate" evidence="3">
    <location>
        <position position="61"/>
    </location>
</feature>
<feature type="modified residue" description="N6-acetyllysine; alternate" evidence="3">
    <location>
        <position position="252"/>
    </location>
</feature>
<feature type="modified residue" description="N6-succinyllysine; alternate" evidence="3">
    <location>
        <position position="252"/>
    </location>
</feature>
<feature type="modified residue" description="N6-acetyllysine; alternate" evidence="3">
    <location>
        <position position="267"/>
    </location>
</feature>
<feature type="modified residue" description="N6-succinyllysine; alternate" evidence="3">
    <location>
        <position position="267"/>
    </location>
</feature>
<feature type="modified residue" description="N6-succinyllysine" evidence="3">
    <location>
        <position position="316"/>
    </location>
</feature>
<name>MECR_BOVIN</name>
<keyword id="KW-0007">Acetylation</keyword>
<keyword id="KW-0275">Fatty acid biosynthesis</keyword>
<keyword id="KW-0276">Fatty acid metabolism</keyword>
<keyword id="KW-0444">Lipid biosynthesis</keyword>
<keyword id="KW-0443">Lipid metabolism</keyword>
<keyword id="KW-0496">Mitochondrion</keyword>
<keyword id="KW-0521">NADP</keyword>
<keyword id="KW-0560">Oxidoreductase</keyword>
<keyword id="KW-1185">Reference proteome</keyword>
<keyword id="KW-0809">Transit peptide</keyword>